<proteinExistence type="inferred from homology"/>
<name>PHOU_RHIME</name>
<accession>Q52989</accession>
<organism>
    <name type="scientific">Rhizobium meliloti (strain 1021)</name>
    <name type="common">Ensifer meliloti</name>
    <name type="synonym">Sinorhizobium meliloti</name>
    <dbReference type="NCBI Taxonomy" id="266834"/>
    <lineage>
        <taxon>Bacteria</taxon>
        <taxon>Pseudomonadati</taxon>
        <taxon>Pseudomonadota</taxon>
        <taxon>Alphaproteobacteria</taxon>
        <taxon>Hyphomicrobiales</taxon>
        <taxon>Rhizobiaceae</taxon>
        <taxon>Sinorhizobium/Ensifer group</taxon>
        <taxon>Sinorhizobium</taxon>
    </lineage>
</organism>
<comment type="function">
    <text evidence="1">Plays a role in the regulation of phosphate uptake.</text>
</comment>
<comment type="subunit">
    <text evidence="1">Homodimer.</text>
</comment>
<comment type="subcellular location">
    <subcellularLocation>
        <location evidence="1">Cytoplasm</location>
    </subcellularLocation>
</comment>
<comment type="similarity">
    <text evidence="3">Belongs to the PhoU family.</text>
</comment>
<gene>
    <name type="primary">phoU</name>
    <name type="ordered locus">R00514</name>
    <name type="ORF">SMc02141</name>
</gene>
<feature type="chain" id="PRO_0000155177" description="Phosphate-specific transport system accessory protein PhoU homolog">
    <location>
        <begin position="1"/>
        <end position="237"/>
    </location>
</feature>
<feature type="region of interest" description="Disordered" evidence="2">
    <location>
        <begin position="217"/>
        <end position="237"/>
    </location>
</feature>
<sequence>MSHAHIMSAFDEELKYLTRRISEMGGLAEQMVADSVRALVNSDLALAQKVISDDTILDDAERQIGEKAIVTIAKRQPMASDLREIMGSIRIAADLERVGDLGKNTAKRVIAVAGSGIPRKLARGLEHLAELALVQLKEVLDVYASRSPEKANSIRERDEEIDAIYTSLFRELLTYMMEDPRNITPCTHLLFCAKNIERIGDHATNIAETIYYMATGAQPQGERPKDDMTSTLGSVTD</sequence>
<evidence type="ECO:0000250" key="1"/>
<evidence type="ECO:0000256" key="2">
    <source>
        <dbReference type="SAM" id="MobiDB-lite"/>
    </source>
</evidence>
<evidence type="ECO:0000305" key="3"/>
<keyword id="KW-0963">Cytoplasm</keyword>
<keyword id="KW-0592">Phosphate transport</keyword>
<keyword id="KW-1185">Reference proteome</keyword>
<keyword id="KW-0813">Transport</keyword>
<reference key="1">
    <citation type="journal article" date="2001" name="Proc. Natl. Acad. Sci. U.S.A.">
        <title>Analysis of the chromosome sequence of the legume symbiont Sinorhizobium meliloti strain 1021.</title>
        <authorList>
            <person name="Capela D."/>
            <person name="Barloy-Hubler F."/>
            <person name="Gouzy J."/>
            <person name="Bothe G."/>
            <person name="Ampe F."/>
            <person name="Batut J."/>
            <person name="Boistard P."/>
            <person name="Becker A."/>
            <person name="Boutry M."/>
            <person name="Cadieu E."/>
            <person name="Dreano S."/>
            <person name="Gloux S."/>
            <person name="Godrie T."/>
            <person name="Goffeau A."/>
            <person name="Kahn D."/>
            <person name="Kiss E."/>
            <person name="Lelaure V."/>
            <person name="Masuy D."/>
            <person name="Pohl T."/>
            <person name="Portetelle D."/>
            <person name="Puehler A."/>
            <person name="Purnelle B."/>
            <person name="Ramsperger U."/>
            <person name="Renard C."/>
            <person name="Thebault P."/>
            <person name="Vandenbol M."/>
            <person name="Weidner S."/>
            <person name="Galibert F."/>
        </authorList>
    </citation>
    <scope>NUCLEOTIDE SEQUENCE [LARGE SCALE GENOMIC DNA]</scope>
    <source>
        <strain>1021</strain>
    </source>
</reference>
<reference key="2">
    <citation type="journal article" date="2001" name="Science">
        <title>The composite genome of the legume symbiont Sinorhizobium meliloti.</title>
        <authorList>
            <person name="Galibert F."/>
            <person name="Finan T.M."/>
            <person name="Long S.R."/>
            <person name="Puehler A."/>
            <person name="Abola P."/>
            <person name="Ampe F."/>
            <person name="Barloy-Hubler F."/>
            <person name="Barnett M.J."/>
            <person name="Becker A."/>
            <person name="Boistard P."/>
            <person name="Bothe G."/>
            <person name="Boutry M."/>
            <person name="Bowser L."/>
            <person name="Buhrmester J."/>
            <person name="Cadieu E."/>
            <person name="Capela D."/>
            <person name="Chain P."/>
            <person name="Cowie A."/>
            <person name="Davis R.W."/>
            <person name="Dreano S."/>
            <person name="Federspiel N.A."/>
            <person name="Fisher R.F."/>
            <person name="Gloux S."/>
            <person name="Godrie T."/>
            <person name="Goffeau A."/>
            <person name="Golding B."/>
            <person name="Gouzy J."/>
            <person name="Gurjal M."/>
            <person name="Hernandez-Lucas I."/>
            <person name="Hong A."/>
            <person name="Huizar L."/>
            <person name="Hyman R.W."/>
            <person name="Jones T."/>
            <person name="Kahn D."/>
            <person name="Kahn M.L."/>
            <person name="Kalman S."/>
            <person name="Keating D.H."/>
            <person name="Kiss E."/>
            <person name="Komp C."/>
            <person name="Lelaure V."/>
            <person name="Masuy D."/>
            <person name="Palm C."/>
            <person name="Peck M.C."/>
            <person name="Pohl T.M."/>
            <person name="Portetelle D."/>
            <person name="Purnelle B."/>
            <person name="Ramsperger U."/>
            <person name="Surzycki R."/>
            <person name="Thebault P."/>
            <person name="Vandenbol M."/>
            <person name="Vorhoelter F.J."/>
            <person name="Weidner S."/>
            <person name="Wells D.H."/>
            <person name="Wong K."/>
            <person name="Yeh K.-C."/>
            <person name="Batut J."/>
        </authorList>
    </citation>
    <scope>NUCLEOTIDE SEQUENCE [LARGE SCALE GENOMIC DNA]</scope>
    <source>
        <strain>1021</strain>
    </source>
</reference>
<reference key="3">
    <citation type="submission" date="1992-11" db="EMBL/GenBank/DDBJ databases">
        <title>Genetics and phoB regulation of phosphonate utilization in Rhizobium meliloti 1021.</title>
        <authorList>
            <person name="McLean P.A."/>
            <person name="Liu C.M."/>
            <person name="Sookdeo C.C."/>
            <person name="Cannon F.C."/>
        </authorList>
    </citation>
    <scope>NUCLEOTIDE SEQUENCE [GENOMIC DNA] OF 121-237</scope>
    <source>
        <strain>1021</strain>
    </source>
</reference>
<protein>
    <recommendedName>
        <fullName>Phosphate-specific transport system accessory protein PhoU homolog</fullName>
        <shortName>Pst system accessory protein PhoU homolog</shortName>
    </recommendedName>
</protein>
<dbReference type="EMBL" id="AL591688">
    <property type="protein sequence ID" value="CAC45086.1"/>
    <property type="molecule type" value="Genomic_DNA"/>
</dbReference>
<dbReference type="EMBL" id="M96261">
    <property type="protein sequence ID" value="AAB42025.1"/>
    <property type="molecule type" value="Genomic_DNA"/>
</dbReference>
<dbReference type="RefSeq" id="NP_384620.1">
    <property type="nucleotide sequence ID" value="NC_003047.1"/>
</dbReference>
<dbReference type="RefSeq" id="WP_003530180.1">
    <property type="nucleotide sequence ID" value="NC_003047.1"/>
</dbReference>
<dbReference type="SMR" id="Q52989"/>
<dbReference type="EnsemblBacteria" id="CAC45086">
    <property type="protein sequence ID" value="CAC45086"/>
    <property type="gene ID" value="SMc02141"/>
</dbReference>
<dbReference type="GeneID" id="89574833"/>
<dbReference type="KEGG" id="sme:SMc02141"/>
<dbReference type="PATRIC" id="fig|266834.11.peg.1887"/>
<dbReference type="eggNOG" id="COG0704">
    <property type="taxonomic scope" value="Bacteria"/>
</dbReference>
<dbReference type="HOGENOM" id="CLU_078518_2_1_5"/>
<dbReference type="OrthoDB" id="9814256at2"/>
<dbReference type="Proteomes" id="UP000001976">
    <property type="component" value="Chromosome"/>
</dbReference>
<dbReference type="GO" id="GO:0005737">
    <property type="term" value="C:cytoplasm"/>
    <property type="evidence" value="ECO:0000250"/>
    <property type="project" value="UniProtKB"/>
</dbReference>
<dbReference type="GO" id="GO:0042803">
    <property type="term" value="F:protein homodimerization activity"/>
    <property type="evidence" value="ECO:0000250"/>
    <property type="project" value="UniProtKB"/>
</dbReference>
<dbReference type="GO" id="GO:0030643">
    <property type="term" value="P:intracellular phosphate ion homeostasis"/>
    <property type="evidence" value="ECO:0007669"/>
    <property type="project" value="InterPro"/>
</dbReference>
<dbReference type="GO" id="GO:0045936">
    <property type="term" value="P:negative regulation of phosphate metabolic process"/>
    <property type="evidence" value="ECO:0000250"/>
    <property type="project" value="UniProtKB"/>
</dbReference>
<dbReference type="GO" id="GO:2000186">
    <property type="term" value="P:negative regulation of phosphate transmembrane transport"/>
    <property type="evidence" value="ECO:0000250"/>
    <property type="project" value="UniProtKB"/>
</dbReference>
<dbReference type="GO" id="GO:0006817">
    <property type="term" value="P:phosphate ion transport"/>
    <property type="evidence" value="ECO:0007669"/>
    <property type="project" value="UniProtKB-KW"/>
</dbReference>
<dbReference type="FunFam" id="1.20.58.220:FF:000004">
    <property type="entry name" value="Phosphate-specific transport system accessory protein PhoU"/>
    <property type="match status" value="1"/>
</dbReference>
<dbReference type="Gene3D" id="1.20.58.220">
    <property type="entry name" value="Phosphate transport system protein phou homolog 2, domain 2"/>
    <property type="match status" value="1"/>
</dbReference>
<dbReference type="InterPro" id="IPR028366">
    <property type="entry name" value="P_transport_PhoU"/>
</dbReference>
<dbReference type="InterPro" id="IPR038078">
    <property type="entry name" value="PhoU-like_sf"/>
</dbReference>
<dbReference type="InterPro" id="IPR026022">
    <property type="entry name" value="PhoU_dom"/>
</dbReference>
<dbReference type="NCBIfam" id="TIGR02135">
    <property type="entry name" value="phoU_full"/>
    <property type="match status" value="1"/>
</dbReference>
<dbReference type="PANTHER" id="PTHR42930">
    <property type="entry name" value="PHOSPHATE-SPECIFIC TRANSPORT SYSTEM ACCESSORY PROTEIN PHOU"/>
    <property type="match status" value="1"/>
</dbReference>
<dbReference type="PANTHER" id="PTHR42930:SF3">
    <property type="entry name" value="PHOSPHATE-SPECIFIC TRANSPORT SYSTEM ACCESSORY PROTEIN PHOU"/>
    <property type="match status" value="1"/>
</dbReference>
<dbReference type="Pfam" id="PF01895">
    <property type="entry name" value="PhoU"/>
    <property type="match status" value="2"/>
</dbReference>
<dbReference type="PIRSF" id="PIRSF003107">
    <property type="entry name" value="PhoU"/>
    <property type="match status" value="1"/>
</dbReference>
<dbReference type="SUPFAM" id="SSF109755">
    <property type="entry name" value="PhoU-like"/>
    <property type="match status" value="1"/>
</dbReference>